<evidence type="ECO:0000250" key="1"/>
<evidence type="ECO:0000256" key="2">
    <source>
        <dbReference type="SAM" id="MobiDB-lite"/>
    </source>
</evidence>
<evidence type="ECO:0000305" key="3"/>
<name>CG21_CANAX</name>
<comment type="function">
    <text evidence="1">Essential for the control of the cell cycle at the G2/M (mitosis) transition. Interacts with the CDC2 protein kinase to form MPF. G2/M cyclins accumulate steadily during G2 and are abruptly destroyed at mitosis (By similarity).</text>
</comment>
<comment type="similarity">
    <text evidence="3">Belongs to the cyclin family. Cyclin AB subfamily.</text>
</comment>
<accession>P47829</accession>
<feature type="chain" id="PRO_0000080407" description="G2/mitotic-specific cyclin CYB1">
    <location>
        <begin position="1"/>
        <end position="492"/>
    </location>
</feature>
<feature type="region of interest" description="Disordered" evidence="2">
    <location>
        <begin position="1"/>
        <end position="176"/>
    </location>
</feature>
<feature type="compositionally biased region" description="Polar residues" evidence="2">
    <location>
        <begin position="23"/>
        <end position="33"/>
    </location>
</feature>
<feature type="compositionally biased region" description="Low complexity" evidence="2">
    <location>
        <begin position="34"/>
        <end position="58"/>
    </location>
</feature>
<feature type="compositionally biased region" description="Polar residues" evidence="2">
    <location>
        <begin position="59"/>
        <end position="83"/>
    </location>
</feature>
<feature type="compositionally biased region" description="Low complexity" evidence="2">
    <location>
        <begin position="111"/>
        <end position="135"/>
    </location>
</feature>
<proteinExistence type="evidence at transcript level"/>
<gene>
    <name type="primary">CYB1</name>
</gene>
<keyword id="KW-0131">Cell cycle</keyword>
<keyword id="KW-0132">Cell division</keyword>
<keyword id="KW-0195">Cyclin</keyword>
<keyword id="KW-0498">Mitosis</keyword>
<sequence>MPQVTKTNNENEFRLTRSKVQHQESISTIKNTTISNSQHKQQTQQQISSPPQVSVTSSEGVSHVNTRQYLGDVSNQYITNAKPTNKRKPLGGDNAPLQKQQHRPSRPIPIASDNNNNGSTSSSSNSSNNNNNDANRLASLAVPSRLPQKRQATESSTNLVEKLRVPQPEVGERSQSYHKKSRLIDYEWQDLDEEDNDDQLMVSEYVNEIFSYYYELETRMLPDPQYLFKQTLLKPRMRSILVDWLVEMHLKFKLLPESLFLAVNVMDRFMSVEVVQIDKLQLLATAALFTAAKNEEVFSPSVKNYAYFTDGSYTPEEVVQAEKYMLTILNFDLNYPNPMNFLRRISKADDYDVQSRTLGKYLLEITIVDYKFIGMRPSLCCASAMYLARLILGKLPVWNGNLIHYSGGYRISDMRECIELMFQYLIAPIEHDEFFKKYAMRKFMRASTLCRNWAKKFQASGRDLFDERLSTHRLTLEDDDEEEEIVVAEAEE</sequence>
<protein>
    <recommendedName>
        <fullName>G2/mitotic-specific cyclin CYB1</fullName>
    </recommendedName>
</protein>
<organism>
    <name type="scientific">Candida albicans</name>
    <name type="common">Yeast</name>
    <dbReference type="NCBI Taxonomy" id="5476"/>
    <lineage>
        <taxon>Eukaryota</taxon>
        <taxon>Fungi</taxon>
        <taxon>Dikarya</taxon>
        <taxon>Ascomycota</taxon>
        <taxon>Saccharomycotina</taxon>
        <taxon>Pichiomycetes</taxon>
        <taxon>Debaryomycetaceae</taxon>
        <taxon>Candida/Lodderomyces clade</taxon>
        <taxon>Candida</taxon>
    </lineage>
</organism>
<dbReference type="EMBL" id="U40430">
    <property type="protein sequence ID" value="AAC49451.1"/>
    <property type="molecule type" value="mRNA"/>
</dbReference>
<dbReference type="PIR" id="JC4828">
    <property type="entry name" value="JC4828"/>
</dbReference>
<dbReference type="SMR" id="P47829"/>
<dbReference type="VEuPathDB" id="FungiDB:C2_01410C_A"/>
<dbReference type="VEuPathDB" id="FungiDB:CAWG_03914"/>
<dbReference type="GO" id="GO:0000785">
    <property type="term" value="C:chromatin"/>
    <property type="evidence" value="ECO:0007669"/>
    <property type="project" value="EnsemblFungi"/>
</dbReference>
<dbReference type="GO" id="GO:0005737">
    <property type="term" value="C:cytoplasm"/>
    <property type="evidence" value="ECO:0007669"/>
    <property type="project" value="EnsemblFungi"/>
</dbReference>
<dbReference type="GO" id="GO:0072687">
    <property type="term" value="C:meiotic spindle"/>
    <property type="evidence" value="ECO:0007669"/>
    <property type="project" value="EnsemblFungi"/>
</dbReference>
<dbReference type="GO" id="GO:1990023">
    <property type="term" value="C:mitotic spindle midzone"/>
    <property type="evidence" value="ECO:0007669"/>
    <property type="project" value="EnsemblFungi"/>
</dbReference>
<dbReference type="GO" id="GO:0071958">
    <property type="term" value="C:new mitotic spindle pole body"/>
    <property type="evidence" value="ECO:0007669"/>
    <property type="project" value="EnsemblFungi"/>
</dbReference>
<dbReference type="GO" id="GO:0034399">
    <property type="term" value="C:nuclear periphery"/>
    <property type="evidence" value="ECO:0007669"/>
    <property type="project" value="EnsemblFungi"/>
</dbReference>
<dbReference type="GO" id="GO:0140602">
    <property type="term" value="C:nucleolar peripheral inclusion body"/>
    <property type="evidence" value="ECO:0007669"/>
    <property type="project" value="EnsemblFungi"/>
</dbReference>
<dbReference type="GO" id="GO:0005730">
    <property type="term" value="C:nucleolus"/>
    <property type="evidence" value="ECO:0007669"/>
    <property type="project" value="EnsemblFungi"/>
</dbReference>
<dbReference type="GO" id="GO:0005654">
    <property type="term" value="C:nucleoplasm"/>
    <property type="evidence" value="ECO:0007669"/>
    <property type="project" value="EnsemblFungi"/>
</dbReference>
<dbReference type="GO" id="GO:0071957">
    <property type="term" value="C:old mitotic spindle pole body"/>
    <property type="evidence" value="ECO:0007669"/>
    <property type="project" value="EnsemblFungi"/>
</dbReference>
<dbReference type="GO" id="GO:0061575">
    <property type="term" value="F:cyclin-dependent protein serine/threonine kinase activator activity"/>
    <property type="evidence" value="ECO:0007669"/>
    <property type="project" value="EnsemblFungi"/>
</dbReference>
<dbReference type="GO" id="GO:0051301">
    <property type="term" value="P:cell division"/>
    <property type="evidence" value="ECO:0007669"/>
    <property type="project" value="UniProtKB-KW"/>
</dbReference>
<dbReference type="GO" id="GO:0030447">
    <property type="term" value="P:filamentous growth"/>
    <property type="evidence" value="ECO:0007669"/>
    <property type="project" value="UniProtKB-ARBA"/>
</dbReference>
<dbReference type="GO" id="GO:0140013">
    <property type="term" value="P:meiotic nuclear division"/>
    <property type="evidence" value="ECO:0007669"/>
    <property type="project" value="EnsemblFungi"/>
</dbReference>
<dbReference type="GO" id="GO:0044772">
    <property type="term" value="P:mitotic cell cycle phase transition"/>
    <property type="evidence" value="ECO:0007669"/>
    <property type="project" value="InterPro"/>
</dbReference>
<dbReference type="GO" id="GO:0075297">
    <property type="term" value="P:negative regulation of ascospore formation"/>
    <property type="evidence" value="ECO:0007669"/>
    <property type="project" value="EnsemblFungi"/>
</dbReference>
<dbReference type="GO" id="GO:0010971">
    <property type="term" value="P:positive regulation of G2/M transition of mitotic cell cycle"/>
    <property type="evidence" value="ECO:0007669"/>
    <property type="project" value="EnsemblFungi"/>
</dbReference>
<dbReference type="GO" id="GO:0140429">
    <property type="term" value="P:positive regulation of mitotic sister chromatid biorientation"/>
    <property type="evidence" value="ECO:0007669"/>
    <property type="project" value="EnsemblFungi"/>
</dbReference>
<dbReference type="CDD" id="cd20512">
    <property type="entry name" value="CYCLIN_CLBs_yeast_rpt2"/>
    <property type="match status" value="1"/>
</dbReference>
<dbReference type="FunFam" id="1.10.472.10:FF:000005">
    <property type="entry name" value="G2/mitotic-specific cyclin B"/>
    <property type="match status" value="1"/>
</dbReference>
<dbReference type="Gene3D" id="1.10.472.10">
    <property type="entry name" value="Cyclin-like"/>
    <property type="match status" value="2"/>
</dbReference>
<dbReference type="InterPro" id="IPR039361">
    <property type="entry name" value="Cyclin"/>
</dbReference>
<dbReference type="InterPro" id="IPR013763">
    <property type="entry name" value="Cyclin-like_dom"/>
</dbReference>
<dbReference type="InterPro" id="IPR036915">
    <property type="entry name" value="Cyclin-like_sf"/>
</dbReference>
<dbReference type="InterPro" id="IPR046965">
    <property type="entry name" value="Cyclin_A/B-like"/>
</dbReference>
<dbReference type="InterPro" id="IPR004367">
    <property type="entry name" value="Cyclin_C-dom"/>
</dbReference>
<dbReference type="InterPro" id="IPR006671">
    <property type="entry name" value="Cyclin_N"/>
</dbReference>
<dbReference type="InterPro" id="IPR048258">
    <property type="entry name" value="Cyclins_cyclin-box"/>
</dbReference>
<dbReference type="PANTHER" id="PTHR10177">
    <property type="entry name" value="CYCLINS"/>
    <property type="match status" value="1"/>
</dbReference>
<dbReference type="Pfam" id="PF02984">
    <property type="entry name" value="Cyclin_C"/>
    <property type="match status" value="1"/>
</dbReference>
<dbReference type="Pfam" id="PF00134">
    <property type="entry name" value="Cyclin_N"/>
    <property type="match status" value="1"/>
</dbReference>
<dbReference type="PIRSF" id="PIRSF001771">
    <property type="entry name" value="Cyclin_A_B_D_E"/>
    <property type="match status" value="1"/>
</dbReference>
<dbReference type="SMART" id="SM00385">
    <property type="entry name" value="CYCLIN"/>
    <property type="match status" value="2"/>
</dbReference>
<dbReference type="SMART" id="SM01332">
    <property type="entry name" value="Cyclin_C"/>
    <property type="match status" value="1"/>
</dbReference>
<dbReference type="SUPFAM" id="SSF47954">
    <property type="entry name" value="Cyclin-like"/>
    <property type="match status" value="2"/>
</dbReference>
<dbReference type="PROSITE" id="PS00292">
    <property type="entry name" value="CYCLINS"/>
    <property type="match status" value="1"/>
</dbReference>
<reference key="1">
    <citation type="journal article" date="1996" name="Gene">
        <title>Candida albicans CDK1 and CYB1: cDNA homologues of the cdc2/CDC28 and cdc13/CLB1/CLB2 cell cycle control genes.</title>
        <authorList>
            <person name="Damagnez V."/>
            <person name="Cottarel G."/>
        </authorList>
    </citation>
    <scope>NUCLEOTIDE SEQUENCE [MRNA]</scope>
</reference>